<dbReference type="EMBL" id="CP000671">
    <property type="protein sequence ID" value="ABQ98966.1"/>
    <property type="molecule type" value="Genomic_DNA"/>
</dbReference>
<dbReference type="SMR" id="A5UDW5"/>
<dbReference type="KEGG" id="hip:CGSHiEE_08295"/>
<dbReference type="HOGENOM" id="CLU_170994_0_0_6"/>
<dbReference type="GO" id="GO:0005829">
    <property type="term" value="C:cytosol"/>
    <property type="evidence" value="ECO:0007669"/>
    <property type="project" value="TreeGrafter"/>
</dbReference>
<dbReference type="GO" id="GO:0005506">
    <property type="term" value="F:iron ion binding"/>
    <property type="evidence" value="ECO:0007669"/>
    <property type="project" value="UniProtKB-UniRule"/>
</dbReference>
<dbReference type="GO" id="GO:0034599">
    <property type="term" value="P:cellular response to oxidative stress"/>
    <property type="evidence" value="ECO:0007669"/>
    <property type="project" value="TreeGrafter"/>
</dbReference>
<dbReference type="FunFam" id="1.10.3880.10:FF:000001">
    <property type="entry name" value="Probable Fe(2+)-trafficking protein"/>
    <property type="match status" value="1"/>
</dbReference>
<dbReference type="Gene3D" id="1.10.3880.10">
    <property type="entry name" value="Fe(II) trafficking protein YggX"/>
    <property type="match status" value="1"/>
</dbReference>
<dbReference type="HAMAP" id="MF_00686">
    <property type="entry name" value="Fe_traffic_YggX"/>
    <property type="match status" value="1"/>
</dbReference>
<dbReference type="InterPro" id="IPR007457">
    <property type="entry name" value="Fe_traffick_prot_YggX"/>
</dbReference>
<dbReference type="InterPro" id="IPR036766">
    <property type="entry name" value="Fe_traffick_prot_YggX_sf"/>
</dbReference>
<dbReference type="NCBIfam" id="NF003817">
    <property type="entry name" value="PRK05408.1"/>
    <property type="match status" value="1"/>
</dbReference>
<dbReference type="PANTHER" id="PTHR36965">
    <property type="entry name" value="FE(2+)-TRAFFICKING PROTEIN-RELATED"/>
    <property type="match status" value="1"/>
</dbReference>
<dbReference type="PANTHER" id="PTHR36965:SF1">
    <property type="entry name" value="FE(2+)-TRAFFICKING PROTEIN-RELATED"/>
    <property type="match status" value="1"/>
</dbReference>
<dbReference type="Pfam" id="PF04362">
    <property type="entry name" value="Iron_traffic"/>
    <property type="match status" value="1"/>
</dbReference>
<dbReference type="PIRSF" id="PIRSF029827">
    <property type="entry name" value="Fe_traffic_YggX"/>
    <property type="match status" value="1"/>
</dbReference>
<dbReference type="SUPFAM" id="SSF111148">
    <property type="entry name" value="YggX-like"/>
    <property type="match status" value="1"/>
</dbReference>
<evidence type="ECO:0000255" key="1">
    <source>
        <dbReference type="HAMAP-Rule" id="MF_00686"/>
    </source>
</evidence>
<feature type="chain" id="PRO_1000045037" description="Probable Fe(2+)-trafficking protein">
    <location>
        <begin position="1"/>
        <end position="90"/>
    </location>
</feature>
<accession>A5UDW5</accession>
<reference key="1">
    <citation type="journal article" date="2007" name="Genome Biol.">
        <title>Characterization and modeling of the Haemophilus influenzae core and supragenomes based on the complete genomic sequences of Rd and 12 clinical nontypeable strains.</title>
        <authorList>
            <person name="Hogg J.S."/>
            <person name="Hu F.Z."/>
            <person name="Janto B."/>
            <person name="Boissy R."/>
            <person name="Hayes J."/>
            <person name="Keefe R."/>
            <person name="Post J.C."/>
            <person name="Ehrlich G.D."/>
        </authorList>
    </citation>
    <scope>NUCLEOTIDE SEQUENCE [LARGE SCALE GENOMIC DNA]</scope>
    <source>
        <strain>PittEE</strain>
    </source>
</reference>
<comment type="function">
    <text evidence="1">Could be a mediator in iron transactions between iron acquisition and iron-requiring processes, such as synthesis and/or repair of Fe-S clusters in biosynthetic enzymes.</text>
</comment>
<comment type="similarity">
    <text evidence="1">Belongs to the Fe(2+)-trafficking protein family.</text>
</comment>
<name>FETP_HAEIE</name>
<sequence>MARTVFCEYLKKEAEGLDFQLYPGELGKRIFDSVSKQAWSEWIKKQTMLVNEKKLNMMNAEHRKLLEQEMVNFLFEGKDVHIEGYVPPSN</sequence>
<proteinExistence type="inferred from homology"/>
<keyword id="KW-0408">Iron</keyword>
<protein>
    <recommendedName>
        <fullName evidence="1">Probable Fe(2+)-trafficking protein</fullName>
    </recommendedName>
</protein>
<gene>
    <name type="ordered locus">CGSHiEE_08295</name>
</gene>
<organism>
    <name type="scientific">Haemophilus influenzae (strain PittEE)</name>
    <dbReference type="NCBI Taxonomy" id="374930"/>
    <lineage>
        <taxon>Bacteria</taxon>
        <taxon>Pseudomonadati</taxon>
        <taxon>Pseudomonadota</taxon>
        <taxon>Gammaproteobacteria</taxon>
        <taxon>Pasteurellales</taxon>
        <taxon>Pasteurellaceae</taxon>
        <taxon>Haemophilus</taxon>
    </lineage>
</organism>